<reference key="1">
    <citation type="journal article" date="2005" name="Nucleic Acids Res.">
        <title>The genome sequence of Salmonella enterica serovar Choleraesuis, a highly invasive and resistant zoonotic pathogen.</title>
        <authorList>
            <person name="Chiu C.-H."/>
            <person name="Tang P."/>
            <person name="Chu C."/>
            <person name="Hu S."/>
            <person name="Bao Q."/>
            <person name="Yu J."/>
            <person name="Chou Y.-Y."/>
            <person name="Wang H.-S."/>
            <person name="Lee Y.-S."/>
        </authorList>
    </citation>
    <scope>NUCLEOTIDE SEQUENCE [LARGE SCALE GENOMIC DNA]</scope>
    <source>
        <strain>SC-B67</strain>
    </source>
</reference>
<accession>Q57TD8</accession>
<keyword id="KW-0963">Cytoplasm</keyword>
<keyword id="KW-0489">Methyltransferase</keyword>
<keyword id="KW-0698">rRNA processing</keyword>
<keyword id="KW-0949">S-adenosyl-L-methionine</keyword>
<keyword id="KW-0808">Transferase</keyword>
<feature type="chain" id="PRO_0000108696" description="Ribosomal RNA small subunit methyltransferase H">
    <location>
        <begin position="1"/>
        <end position="312"/>
    </location>
</feature>
<feature type="binding site" evidence="1">
    <location>
        <begin position="34"/>
        <end position="36"/>
    </location>
    <ligand>
        <name>S-adenosyl-L-methionine</name>
        <dbReference type="ChEBI" id="CHEBI:59789"/>
    </ligand>
</feature>
<feature type="binding site" evidence="1">
    <location>
        <position position="54"/>
    </location>
    <ligand>
        <name>S-adenosyl-L-methionine</name>
        <dbReference type="ChEBI" id="CHEBI:59789"/>
    </ligand>
</feature>
<feature type="binding site" evidence="1">
    <location>
        <position position="78"/>
    </location>
    <ligand>
        <name>S-adenosyl-L-methionine</name>
        <dbReference type="ChEBI" id="CHEBI:59789"/>
    </ligand>
</feature>
<feature type="binding site" evidence="1">
    <location>
        <position position="100"/>
    </location>
    <ligand>
        <name>S-adenosyl-L-methionine</name>
        <dbReference type="ChEBI" id="CHEBI:59789"/>
    </ligand>
</feature>
<feature type="binding site" evidence="1">
    <location>
        <position position="107"/>
    </location>
    <ligand>
        <name>S-adenosyl-L-methionine</name>
        <dbReference type="ChEBI" id="CHEBI:59789"/>
    </ligand>
</feature>
<organism>
    <name type="scientific">Salmonella choleraesuis (strain SC-B67)</name>
    <dbReference type="NCBI Taxonomy" id="321314"/>
    <lineage>
        <taxon>Bacteria</taxon>
        <taxon>Pseudomonadati</taxon>
        <taxon>Pseudomonadota</taxon>
        <taxon>Gammaproteobacteria</taxon>
        <taxon>Enterobacterales</taxon>
        <taxon>Enterobacteriaceae</taxon>
        <taxon>Salmonella</taxon>
    </lineage>
</organism>
<protein>
    <recommendedName>
        <fullName evidence="1">Ribosomal RNA small subunit methyltransferase H</fullName>
        <ecNumber evidence="1">2.1.1.199</ecNumber>
    </recommendedName>
    <alternativeName>
        <fullName evidence="1">16S rRNA m(4)C1402 methyltransferase</fullName>
    </alternativeName>
    <alternativeName>
        <fullName evidence="1">rRNA (cytosine-N(4)-)-methyltransferase RsmH</fullName>
    </alternativeName>
</protein>
<dbReference type="EC" id="2.1.1.199" evidence="1"/>
<dbReference type="EMBL" id="AE017220">
    <property type="protein sequence ID" value="AAX64023.1"/>
    <property type="molecule type" value="Genomic_DNA"/>
</dbReference>
<dbReference type="SMR" id="Q57TD8"/>
<dbReference type="KEGG" id="sec:SCH_0117"/>
<dbReference type="HOGENOM" id="CLU_038422_2_0_6"/>
<dbReference type="Proteomes" id="UP000000538">
    <property type="component" value="Chromosome"/>
</dbReference>
<dbReference type="GO" id="GO:0005737">
    <property type="term" value="C:cytoplasm"/>
    <property type="evidence" value="ECO:0007669"/>
    <property type="project" value="UniProtKB-SubCell"/>
</dbReference>
<dbReference type="GO" id="GO:0071424">
    <property type="term" value="F:rRNA (cytosine-N4-)-methyltransferase activity"/>
    <property type="evidence" value="ECO:0007669"/>
    <property type="project" value="UniProtKB-UniRule"/>
</dbReference>
<dbReference type="GO" id="GO:0070475">
    <property type="term" value="P:rRNA base methylation"/>
    <property type="evidence" value="ECO:0007669"/>
    <property type="project" value="UniProtKB-UniRule"/>
</dbReference>
<dbReference type="FunFam" id="1.10.150.170:FF:000001">
    <property type="entry name" value="Ribosomal RNA small subunit methyltransferase H"/>
    <property type="match status" value="1"/>
</dbReference>
<dbReference type="Gene3D" id="1.10.150.170">
    <property type="entry name" value="Putative methyltransferase TM0872, insert domain"/>
    <property type="match status" value="1"/>
</dbReference>
<dbReference type="Gene3D" id="3.40.50.150">
    <property type="entry name" value="Vaccinia Virus protein VP39"/>
    <property type="match status" value="1"/>
</dbReference>
<dbReference type="HAMAP" id="MF_01007">
    <property type="entry name" value="16SrRNA_methyltr_H"/>
    <property type="match status" value="1"/>
</dbReference>
<dbReference type="InterPro" id="IPR002903">
    <property type="entry name" value="RsmH"/>
</dbReference>
<dbReference type="InterPro" id="IPR023397">
    <property type="entry name" value="SAM-dep_MeTrfase_MraW_recog"/>
</dbReference>
<dbReference type="InterPro" id="IPR029063">
    <property type="entry name" value="SAM-dependent_MTases_sf"/>
</dbReference>
<dbReference type="NCBIfam" id="TIGR00006">
    <property type="entry name" value="16S rRNA (cytosine(1402)-N(4))-methyltransferase RsmH"/>
    <property type="match status" value="1"/>
</dbReference>
<dbReference type="PANTHER" id="PTHR11265:SF0">
    <property type="entry name" value="12S RRNA N4-METHYLCYTIDINE METHYLTRANSFERASE"/>
    <property type="match status" value="1"/>
</dbReference>
<dbReference type="PANTHER" id="PTHR11265">
    <property type="entry name" value="S-ADENOSYL-METHYLTRANSFERASE MRAW"/>
    <property type="match status" value="1"/>
</dbReference>
<dbReference type="Pfam" id="PF01795">
    <property type="entry name" value="Methyltransf_5"/>
    <property type="match status" value="1"/>
</dbReference>
<dbReference type="PIRSF" id="PIRSF004486">
    <property type="entry name" value="MraW"/>
    <property type="match status" value="1"/>
</dbReference>
<dbReference type="SUPFAM" id="SSF81799">
    <property type="entry name" value="Putative methyltransferase TM0872, insert domain"/>
    <property type="match status" value="1"/>
</dbReference>
<dbReference type="SUPFAM" id="SSF53335">
    <property type="entry name" value="S-adenosyl-L-methionine-dependent methyltransferases"/>
    <property type="match status" value="1"/>
</dbReference>
<proteinExistence type="inferred from homology"/>
<sequence length="312" mass="34722">MENFKHTTVLLDEAVNGLNIRPDGIYIDGTFGRGGHSRLILSQLGEEGRLLAIDRDPQAIAVAQTINDPRFSIIHGPFSALADYVAEREFTGKIDGILLDLGVSSPQLDDAERGFSFMRDGPLDMRMDPTRGQSAAEWLQTAEEADIAWVLKTFGEERFAKRIARAIVERNREQPMTRTKELAEVVAAATPVKDKFKHPATRTFQAVRIWVNSELEEIEQALKSSLSVLAPGGRLSIISFHSLEDRIVKRFMREQSRGPQVPAGLPMTEAQRKKLGGRELRALGKLMPGEKEVAENPRARSSVLRIAERTNA</sequence>
<name>RSMH_SALCH</name>
<gene>
    <name evidence="1" type="primary">rsmH</name>
    <name type="synonym">mraW</name>
    <name type="ordered locus">SCH_0117</name>
</gene>
<evidence type="ECO:0000255" key="1">
    <source>
        <dbReference type="HAMAP-Rule" id="MF_01007"/>
    </source>
</evidence>
<comment type="function">
    <text evidence="1">Specifically methylates the N4 position of cytidine in position 1402 (C1402) of 16S rRNA.</text>
</comment>
<comment type="catalytic activity">
    <reaction evidence="1">
        <text>cytidine(1402) in 16S rRNA + S-adenosyl-L-methionine = N(4)-methylcytidine(1402) in 16S rRNA + S-adenosyl-L-homocysteine + H(+)</text>
        <dbReference type="Rhea" id="RHEA:42928"/>
        <dbReference type="Rhea" id="RHEA-COMP:10286"/>
        <dbReference type="Rhea" id="RHEA-COMP:10287"/>
        <dbReference type="ChEBI" id="CHEBI:15378"/>
        <dbReference type="ChEBI" id="CHEBI:57856"/>
        <dbReference type="ChEBI" id="CHEBI:59789"/>
        <dbReference type="ChEBI" id="CHEBI:74506"/>
        <dbReference type="ChEBI" id="CHEBI:82748"/>
        <dbReference type="EC" id="2.1.1.199"/>
    </reaction>
</comment>
<comment type="subcellular location">
    <subcellularLocation>
        <location evidence="1">Cytoplasm</location>
    </subcellularLocation>
</comment>
<comment type="similarity">
    <text evidence="1">Belongs to the methyltransferase superfamily. RsmH family.</text>
</comment>